<name>CONA_CANGL</name>
<reference key="1">
    <citation type="journal article" date="1990" name="FEBS Lett.">
        <title>Structure of the gene encoding concanavalin A from Canavalia gladiata and its expression in Escherichia coli cells.</title>
        <authorList>
            <person name="Yamauchi D."/>
            <person name="Minamikawa T."/>
        </authorList>
    </citation>
    <scope>NUCLEOTIDE SEQUENCE [GENOMIC DNA]</scope>
    <source>
        <tissue>Seedling</tissue>
    </source>
</reference>
<reference key="2">
    <citation type="journal article" date="1989" name="Plant Cell Physiol.">
        <title>Nucleotide sequence of cDNA for concanavalin A from Canavalia gladiata seeds.</title>
        <authorList>
            <person name="Yamauchi D."/>
            <person name="Nakamura K."/>
            <person name="Asahi T."/>
            <person name="Minamikawa T."/>
        </authorList>
    </citation>
    <scope>NUCLEOTIDE SEQUENCE [GENOMIC DNA]</scope>
    <source>
        <tissue>Seed</tissue>
    </source>
</reference>
<reference key="3">
    <citation type="journal article" date="2005" name="Arch. Biochem. Biophys.">
        <title>Isolation and characterization of a glucose/mannose/rhamnose-specific lectin from the knife bean Canavalia gladiata.</title>
        <authorList>
            <person name="Wong J.H."/>
            <person name="Ng T.B."/>
        </authorList>
    </citation>
    <scope>PROTEIN SEQUENCE OF 164-183</scope>
    <scope>FUNCTION</scope>
    <source>
        <tissue>Fruit</tissue>
    </source>
</reference>
<reference key="4">
    <citation type="journal article" date="2007" name="BMC Struct. Biol.">
        <title>Structure of a lectin from Canavalia gladiata seeds: new structural insights for old molecules.</title>
        <authorList>
            <person name="Delatorre P."/>
            <person name="Rocha B.A.M."/>
            <person name="Souza E.P."/>
            <person name="Oliveira T.M."/>
            <person name="Bezerra G.A."/>
            <person name="Moreno F.B.M.B."/>
            <person name="Freitas B.T."/>
            <person name="Santi-Gadelha T."/>
            <person name="Sampaio A.H."/>
            <person name="Azevedo W.F. Jr."/>
            <person name="Cavada B.S."/>
        </authorList>
    </citation>
    <scope>X-RAY CRYSTALLOGRAPHY (2.3 ANGSTROMS) OF 30-281 IN COMPLEX WITH ALPHA-AMINOBUTYRIC ACID; ALPHA-METHYL-MANNOSIDE; CALCIUM AND MANGANESE IONS</scope>
    <scope>IDENTIFICATION BY MASS SPECTROMETRY</scope>
    <scope>SUBUNIT</scope>
</reference>
<organism>
    <name type="scientific">Canavalia gladiata</name>
    <name type="common">Sword bean</name>
    <name type="synonym">Dolichos gladiatus</name>
    <dbReference type="NCBI Taxonomy" id="3824"/>
    <lineage>
        <taxon>Eukaryota</taxon>
        <taxon>Viridiplantae</taxon>
        <taxon>Streptophyta</taxon>
        <taxon>Embryophyta</taxon>
        <taxon>Tracheophyta</taxon>
        <taxon>Spermatophyta</taxon>
        <taxon>Magnoliopsida</taxon>
        <taxon>eudicotyledons</taxon>
        <taxon>Gunneridae</taxon>
        <taxon>Pentapetalae</taxon>
        <taxon>rosids</taxon>
        <taxon>fabids</taxon>
        <taxon>Fabales</taxon>
        <taxon>Fabaceae</taxon>
        <taxon>Papilionoideae</taxon>
        <taxon>50 kb inversion clade</taxon>
        <taxon>NPAAA clade</taxon>
        <taxon>indigoferoid/millettioid clade</taxon>
        <taxon>Phaseoleae</taxon>
        <taxon>Canavalia</taxon>
    </lineage>
</organism>
<feature type="signal peptide">
    <location>
        <begin position="1"/>
        <end position="29"/>
    </location>
</feature>
<feature type="chain" id="PRO_0000017573" description="Concanavalin-A, 2nd part">
    <location>
        <begin position="30"/>
        <end position="148"/>
    </location>
</feature>
<feature type="propeptide" id="PRO_0000017574" evidence="2">
    <location>
        <begin position="149"/>
        <end position="163"/>
    </location>
</feature>
<feature type="chain" id="PRO_0000017575" description="Concanavalin-A, 1st part">
    <location>
        <begin position="164"/>
        <end position="281"/>
    </location>
</feature>
<feature type="propeptide" id="PRO_0000017576">
    <location>
        <begin position="282"/>
        <end position="290"/>
    </location>
</feature>
<feature type="binding site">
    <location>
        <position position="119"/>
    </location>
    <ligand>
        <name>a carbohydrate</name>
        <dbReference type="ChEBI" id="CHEBI:16646"/>
    </ligand>
</feature>
<feature type="binding site" evidence="1">
    <location>
        <position position="119"/>
    </location>
    <ligand>
        <name>Ca(2+)</name>
        <dbReference type="ChEBI" id="CHEBI:29108"/>
    </ligand>
</feature>
<feature type="binding site">
    <location>
        <position position="139"/>
    </location>
    <ligand>
        <name>a carbohydrate</name>
        <dbReference type="ChEBI" id="CHEBI:16646"/>
    </ligand>
</feature>
<feature type="binding site">
    <location>
        <position position="171"/>
    </location>
    <ligand>
        <name>Mn(2+)</name>
        <dbReference type="ChEBI" id="CHEBI:29035"/>
    </ligand>
</feature>
<feature type="binding site" evidence="3">
    <location>
        <position position="173"/>
    </location>
    <ligand>
        <name>Ca(2+)</name>
        <dbReference type="ChEBI" id="CHEBI:29108"/>
    </ligand>
</feature>
<feature type="binding site">
    <location>
        <position position="173"/>
    </location>
    <ligand>
        <name>Mn(2+)</name>
        <dbReference type="ChEBI" id="CHEBI:29035"/>
    </ligand>
</feature>
<feature type="binding site" evidence="3">
    <location>
        <position position="175"/>
    </location>
    <ligand>
        <name>Ca(2+)</name>
        <dbReference type="ChEBI" id="CHEBI:29108"/>
    </ligand>
</feature>
<feature type="binding site" evidence="3">
    <location>
        <position position="177"/>
    </location>
    <ligand>
        <name>Ca(2+)</name>
        <dbReference type="ChEBI" id="CHEBI:29108"/>
    </ligand>
</feature>
<feature type="binding site" evidence="3">
    <location>
        <position position="182"/>
    </location>
    <ligand>
        <name>Ca(2+)</name>
        <dbReference type="ChEBI" id="CHEBI:29108"/>
    </ligand>
</feature>
<feature type="binding site">
    <location>
        <position position="182"/>
    </location>
    <ligand>
        <name>Mn(2+)</name>
        <dbReference type="ChEBI" id="CHEBI:29035"/>
    </ligand>
</feature>
<feature type="binding site">
    <location>
        <position position="187"/>
    </location>
    <ligand>
        <name>Mn(2+)</name>
        <dbReference type="ChEBI" id="CHEBI:29035"/>
    </ligand>
</feature>
<feature type="binding site">
    <location>
        <begin position="262"/>
        <end position="263"/>
    </location>
    <ligand>
        <name>a carbohydrate</name>
        <dbReference type="ChEBI" id="CHEBI:16646"/>
    </ligand>
</feature>
<feature type="site" description="Cleavage">
    <location>
        <begin position="148"/>
        <end position="149"/>
    </location>
</feature>
<feature type="site" description="Cleavage">
    <location>
        <begin position="163"/>
        <end position="164"/>
    </location>
</feature>
<feature type="site" description="Cleavage">
    <location>
        <begin position="281"/>
        <end position="282"/>
    </location>
</feature>
<feature type="glycosylation site" description="N-linked (GlcNAc...) asparagine" evidence="4">
    <location>
        <position position="152"/>
    </location>
</feature>
<feature type="strand" evidence="5">
    <location>
        <begin position="28"/>
        <end position="32"/>
    </location>
</feature>
<feature type="strand" evidence="5">
    <location>
        <begin position="34"/>
        <end position="43"/>
    </location>
</feature>
<feature type="strand" evidence="5">
    <location>
        <begin position="51"/>
        <end position="55"/>
    </location>
</feature>
<feature type="strand" evidence="6">
    <location>
        <begin position="61"/>
        <end position="63"/>
    </location>
</feature>
<feature type="strand" evidence="5">
    <location>
        <begin position="65"/>
        <end position="68"/>
    </location>
</feature>
<feature type="strand" evidence="5">
    <location>
        <begin position="81"/>
        <end position="88"/>
    </location>
</feature>
<feature type="strand" evidence="5">
    <location>
        <begin position="97"/>
        <end position="109"/>
    </location>
</feature>
<feature type="strand" evidence="5">
    <location>
        <begin position="113"/>
        <end position="116"/>
    </location>
</feature>
<feature type="strand" evidence="5">
    <location>
        <begin position="120"/>
        <end position="127"/>
    </location>
</feature>
<feature type="helix" evidence="5">
    <location>
        <begin position="138"/>
        <end position="140"/>
    </location>
</feature>
<feature type="turn" evidence="5">
    <location>
        <begin position="141"/>
        <end position="143"/>
    </location>
</feature>
<protein>
    <recommendedName>
        <fullName>Concanavalin-A</fullName>
        <shortName>Con A</shortName>
    </recommendedName>
</protein>
<evidence type="ECO:0000250" key="1"/>
<evidence type="ECO:0000269" key="2">
    <source>
    </source>
</evidence>
<evidence type="ECO:0000269" key="3">
    <source>
    </source>
</evidence>
<evidence type="ECO:0000305" key="4"/>
<evidence type="ECO:0007829" key="5">
    <source>
        <dbReference type="PDB" id="2OVU"/>
    </source>
</evidence>
<evidence type="ECO:0007829" key="6">
    <source>
        <dbReference type="PDB" id="2P2K"/>
    </source>
</evidence>
<proteinExistence type="evidence at protein level"/>
<dbReference type="EMBL" id="X16041">
    <property type="protein sequence ID" value="CAA34163.1"/>
    <property type="molecule type" value="Genomic_DNA"/>
</dbReference>
<dbReference type="PIR" id="A34139">
    <property type="entry name" value="A34139"/>
</dbReference>
<dbReference type="PDB" id="1WUV">
    <property type="method" value="X-ray"/>
    <property type="resolution" value="2.30 A"/>
    <property type="chains" value="A/D/G/J=28-148"/>
</dbReference>
<dbReference type="PDB" id="2D7F">
    <property type="method" value="X-ray"/>
    <property type="resolution" value="2.31 A"/>
    <property type="chains" value="A/F/L/S=28-148"/>
</dbReference>
<dbReference type="PDB" id="2EF6">
    <property type="method" value="X-ray"/>
    <property type="resolution" value="2.10 A"/>
    <property type="chains" value="A/B/C/D=28-148"/>
</dbReference>
<dbReference type="PDB" id="2OVU">
    <property type="method" value="X-ray"/>
    <property type="resolution" value="1.50 A"/>
    <property type="chains" value="A=28-148"/>
</dbReference>
<dbReference type="PDB" id="2P2K">
    <property type="method" value="X-ray"/>
    <property type="resolution" value="1.98 A"/>
    <property type="chains" value="A/B/C/D=28-148"/>
</dbReference>
<dbReference type="PDBsum" id="1WUV"/>
<dbReference type="PDBsum" id="2D7F"/>
<dbReference type="PDBsum" id="2EF6"/>
<dbReference type="PDBsum" id="2OVU"/>
<dbReference type="PDBsum" id="2P2K"/>
<dbReference type="SMR" id="P14894"/>
<dbReference type="UniLectin" id="P14894"/>
<dbReference type="EvolutionaryTrace" id="P14894"/>
<dbReference type="GO" id="GO:0005537">
    <property type="term" value="F:D-mannose binding"/>
    <property type="evidence" value="ECO:0007669"/>
    <property type="project" value="UniProtKB-KW"/>
</dbReference>
<dbReference type="GO" id="GO:0046872">
    <property type="term" value="F:metal ion binding"/>
    <property type="evidence" value="ECO:0007669"/>
    <property type="project" value="UniProtKB-KW"/>
</dbReference>
<dbReference type="GO" id="GO:0048029">
    <property type="term" value="F:monosaccharide binding"/>
    <property type="evidence" value="ECO:0000314"/>
    <property type="project" value="UniProtKB"/>
</dbReference>
<dbReference type="GO" id="GO:0045892">
    <property type="term" value="P:negative regulation of DNA-templated transcription"/>
    <property type="evidence" value="ECO:0000314"/>
    <property type="project" value="UniProtKB"/>
</dbReference>
<dbReference type="GO" id="GO:0051781">
    <property type="term" value="P:positive regulation of cell division"/>
    <property type="evidence" value="ECO:0007669"/>
    <property type="project" value="UniProtKB-KW"/>
</dbReference>
<dbReference type="GO" id="GO:0045840">
    <property type="term" value="P:positive regulation of mitotic nuclear division"/>
    <property type="evidence" value="ECO:0000314"/>
    <property type="project" value="UniProtKB"/>
</dbReference>
<dbReference type="GO" id="GO:0050688">
    <property type="term" value="P:regulation of defense response to virus"/>
    <property type="evidence" value="ECO:0007669"/>
    <property type="project" value="UniProtKB-KW"/>
</dbReference>
<dbReference type="CDD" id="cd06899">
    <property type="entry name" value="lectin_legume_LecRK_Arcelin_ConA"/>
    <property type="match status" value="1"/>
</dbReference>
<dbReference type="FunFam" id="2.60.120.200:FF:000237">
    <property type="entry name" value="Mannose/glucose-specific lectin"/>
    <property type="match status" value="1"/>
</dbReference>
<dbReference type="Gene3D" id="2.60.120.200">
    <property type="match status" value="1"/>
</dbReference>
<dbReference type="InterPro" id="IPR013320">
    <property type="entry name" value="ConA-like_dom_sf"/>
</dbReference>
<dbReference type="InterPro" id="IPR016363">
    <property type="entry name" value="L-lectin"/>
</dbReference>
<dbReference type="InterPro" id="IPR000985">
    <property type="entry name" value="Lectin_LegA_CS"/>
</dbReference>
<dbReference type="InterPro" id="IPR019825">
    <property type="entry name" value="Lectin_legB_Mn/Ca_BS"/>
</dbReference>
<dbReference type="InterPro" id="IPR001220">
    <property type="entry name" value="Legume_lectin_dom"/>
</dbReference>
<dbReference type="InterPro" id="IPR050258">
    <property type="entry name" value="Leguminous_Lectin"/>
</dbReference>
<dbReference type="PANTHER" id="PTHR32401">
    <property type="entry name" value="CONCANAVALIN A-LIKE LECTIN FAMILY PROTEIN"/>
    <property type="match status" value="1"/>
</dbReference>
<dbReference type="PANTHER" id="PTHR32401:SF47">
    <property type="entry name" value="LEGUME LECTIN DOMAIN-CONTAINING PROTEIN"/>
    <property type="match status" value="1"/>
</dbReference>
<dbReference type="Pfam" id="PF00139">
    <property type="entry name" value="Lectin_legB"/>
    <property type="match status" value="1"/>
</dbReference>
<dbReference type="PIRSF" id="PIRSF002690">
    <property type="entry name" value="L-type_lectin_plant"/>
    <property type="match status" value="1"/>
</dbReference>
<dbReference type="SUPFAM" id="SSF49899">
    <property type="entry name" value="Concanavalin A-like lectins/glucanases"/>
    <property type="match status" value="1"/>
</dbReference>
<dbReference type="PROSITE" id="PS00308">
    <property type="entry name" value="LECTIN_LEGUME_ALPHA"/>
    <property type="match status" value="1"/>
</dbReference>
<dbReference type="PROSITE" id="PS00307">
    <property type="entry name" value="LECTIN_LEGUME_BETA"/>
    <property type="match status" value="1"/>
</dbReference>
<accession>P14894</accession>
<keyword id="KW-0002">3D-structure</keyword>
<keyword id="KW-0930">Antiviral protein</keyword>
<keyword id="KW-0106">Calcium</keyword>
<keyword id="KW-0903">Direct protein sequencing</keyword>
<keyword id="KW-0325">Glycoprotein</keyword>
<keyword id="KW-0348">Hemagglutinin</keyword>
<keyword id="KW-0430">Lectin</keyword>
<keyword id="KW-0464">Manganese</keyword>
<keyword id="KW-0465">Mannose-binding</keyword>
<keyword id="KW-0479">Metal-binding</keyword>
<keyword id="KW-0497">Mitogen</keyword>
<keyword id="KW-0732">Signal</keyword>
<comment type="function">
    <text evidence="2">Glucose/D-mannose/rhamnose specific lectin. Has hemagglutinating activity towards rabbit erythrocytes. Has mitogenic activity towards murine splenocytes that is inhibited by glucose. Inhibits HIV-1 reverse transcriptase with an IC(50) of 35 uM. Has a potent antiproliferative activity against L1210 leukemia cells in vitro that is not inhibited by glucose. Inhibits translation in cell-free rabbit reticulocyte system with an IC(50) of 2.08 uM. Lacks anti-fungal activity against M.arachidicola, B.cenera and F.oxysporum.</text>
</comment>
<comment type="subunit">
    <text evidence="3">Homotetramer.</text>
</comment>
<comment type="PTM">
    <text>The mature chain consists of residues 164-281 followed by 30-148. To form a mature chain the precursor undergoes further post-translational modification after removal of the signal sequence; cleavage after Asn at positions Asn-148, Asn-163, and Asn-281 is followed by transposition and ligation (By formation of a new peptide bond) of residues 164-281 and 30-148.</text>
</comment>
<comment type="miscellaneous">
    <text>Binds one manganese (or another transition metal) ion and one calcium ion. The metal ions are essential for the saccharide-binding and cell-agglutinating activities.</text>
</comment>
<comment type="similarity">
    <text evidence="4">Belongs to the leguminous lectin family.</text>
</comment>
<sequence length="290" mass="31421">MAISKKSSLFLPIFTFITMFLMVVNKVSSSTHETNALHFMFNQFSKDQKDLILQGDATTGTDGNLELTRVSSNGSPQGSSVGRALFYAPVHIWESSAVVASFDATFTFLIKSPDSHPADGIAFFISNIDSSIPSGSTGRLLGLFPDANVIRNSTTIDFNAAYNADTIVAVELDTYPNTDIGDPNYPHIGIDIKSVRSKKTAKWNMQNGKVGTAHIIYNSVGKRLSAVVSYPNGDSATVSYDVDLDNVLPEWVRVGLSASTGLYKETNTILSWSFTSKLKSNEIPDIATVV</sequence>